<protein>
    <recommendedName>
        <fullName>Hemoglobin subunit alpha-I/II</fullName>
    </recommendedName>
    <alternativeName>
        <fullName>Alpha-I/II-globin</fullName>
    </alternativeName>
    <alternativeName>
        <fullName>Hemoglobin alpha-I/II chain</fullName>
    </alternativeName>
</protein>
<dbReference type="PIR" id="B25727">
    <property type="entry name" value="B25727"/>
</dbReference>
<dbReference type="BMRB" id="P09423"/>
<dbReference type="SMR" id="P09423"/>
<dbReference type="GO" id="GO:0072562">
    <property type="term" value="C:blood microparticle"/>
    <property type="evidence" value="ECO:0007669"/>
    <property type="project" value="TreeGrafter"/>
</dbReference>
<dbReference type="GO" id="GO:0031838">
    <property type="term" value="C:haptoglobin-hemoglobin complex"/>
    <property type="evidence" value="ECO:0007669"/>
    <property type="project" value="TreeGrafter"/>
</dbReference>
<dbReference type="GO" id="GO:0005833">
    <property type="term" value="C:hemoglobin complex"/>
    <property type="evidence" value="ECO:0007669"/>
    <property type="project" value="InterPro"/>
</dbReference>
<dbReference type="GO" id="GO:0031720">
    <property type="term" value="F:haptoglobin binding"/>
    <property type="evidence" value="ECO:0007669"/>
    <property type="project" value="TreeGrafter"/>
</dbReference>
<dbReference type="GO" id="GO:0020037">
    <property type="term" value="F:heme binding"/>
    <property type="evidence" value="ECO:0007669"/>
    <property type="project" value="InterPro"/>
</dbReference>
<dbReference type="GO" id="GO:0005506">
    <property type="term" value="F:iron ion binding"/>
    <property type="evidence" value="ECO:0007669"/>
    <property type="project" value="InterPro"/>
</dbReference>
<dbReference type="GO" id="GO:0043177">
    <property type="term" value="F:organic acid binding"/>
    <property type="evidence" value="ECO:0007669"/>
    <property type="project" value="TreeGrafter"/>
</dbReference>
<dbReference type="GO" id="GO:0019825">
    <property type="term" value="F:oxygen binding"/>
    <property type="evidence" value="ECO:0007669"/>
    <property type="project" value="InterPro"/>
</dbReference>
<dbReference type="GO" id="GO:0005344">
    <property type="term" value="F:oxygen carrier activity"/>
    <property type="evidence" value="ECO:0007669"/>
    <property type="project" value="UniProtKB-KW"/>
</dbReference>
<dbReference type="GO" id="GO:0004601">
    <property type="term" value="F:peroxidase activity"/>
    <property type="evidence" value="ECO:0007669"/>
    <property type="project" value="TreeGrafter"/>
</dbReference>
<dbReference type="GO" id="GO:0042744">
    <property type="term" value="P:hydrogen peroxide catabolic process"/>
    <property type="evidence" value="ECO:0007669"/>
    <property type="project" value="TreeGrafter"/>
</dbReference>
<dbReference type="CDD" id="cd08927">
    <property type="entry name" value="Hb-alpha-like"/>
    <property type="match status" value="1"/>
</dbReference>
<dbReference type="FunFam" id="1.10.490.10:FF:000002">
    <property type="entry name" value="Hemoglobin subunit alpha"/>
    <property type="match status" value="1"/>
</dbReference>
<dbReference type="Gene3D" id="1.10.490.10">
    <property type="entry name" value="Globins"/>
    <property type="match status" value="1"/>
</dbReference>
<dbReference type="InterPro" id="IPR000971">
    <property type="entry name" value="Globin"/>
</dbReference>
<dbReference type="InterPro" id="IPR009050">
    <property type="entry name" value="Globin-like_sf"/>
</dbReference>
<dbReference type="InterPro" id="IPR012292">
    <property type="entry name" value="Globin/Proto"/>
</dbReference>
<dbReference type="InterPro" id="IPR002338">
    <property type="entry name" value="Hemoglobin_a-typ"/>
</dbReference>
<dbReference type="InterPro" id="IPR050056">
    <property type="entry name" value="Hemoglobin_oxygen_transport"/>
</dbReference>
<dbReference type="InterPro" id="IPR002339">
    <property type="entry name" value="Hemoglobin_pi"/>
</dbReference>
<dbReference type="PANTHER" id="PTHR11442">
    <property type="entry name" value="HEMOGLOBIN FAMILY MEMBER"/>
    <property type="match status" value="1"/>
</dbReference>
<dbReference type="PANTHER" id="PTHR11442:SF48">
    <property type="entry name" value="HEMOGLOBIN SUBUNIT ALPHA"/>
    <property type="match status" value="1"/>
</dbReference>
<dbReference type="Pfam" id="PF00042">
    <property type="entry name" value="Globin"/>
    <property type="match status" value="1"/>
</dbReference>
<dbReference type="PRINTS" id="PR00612">
    <property type="entry name" value="ALPHAHAEM"/>
</dbReference>
<dbReference type="PRINTS" id="PR00815">
    <property type="entry name" value="PIHAEM"/>
</dbReference>
<dbReference type="SUPFAM" id="SSF46458">
    <property type="entry name" value="Globin-like"/>
    <property type="match status" value="1"/>
</dbReference>
<dbReference type="PROSITE" id="PS01033">
    <property type="entry name" value="GLOBIN"/>
    <property type="match status" value="1"/>
</dbReference>
<name>HBA_BISBO</name>
<organism>
    <name type="scientific">Bison bonasus</name>
    <name type="common">European bison</name>
    <dbReference type="NCBI Taxonomy" id="9902"/>
    <lineage>
        <taxon>Eukaryota</taxon>
        <taxon>Metazoa</taxon>
        <taxon>Chordata</taxon>
        <taxon>Craniata</taxon>
        <taxon>Vertebrata</taxon>
        <taxon>Euteleostomi</taxon>
        <taxon>Mammalia</taxon>
        <taxon>Eutheria</taxon>
        <taxon>Laurasiatheria</taxon>
        <taxon>Artiodactyla</taxon>
        <taxon>Ruminantia</taxon>
        <taxon>Pecora</taxon>
        <taxon>Bovidae</taxon>
        <taxon>Bovinae</taxon>
        <taxon>Bison</taxon>
    </lineage>
</organism>
<evidence type="ECO:0000250" key="1">
    <source>
        <dbReference type="UniProtKB" id="P01942"/>
    </source>
</evidence>
<evidence type="ECO:0000250" key="2">
    <source>
        <dbReference type="UniProtKB" id="P18969"/>
    </source>
</evidence>
<evidence type="ECO:0000250" key="3">
    <source>
        <dbReference type="UniProtKB" id="P69905"/>
    </source>
</evidence>
<evidence type="ECO:0000255" key="4">
    <source>
        <dbReference type="PROSITE-ProRule" id="PRU00238"/>
    </source>
</evidence>
<keyword id="KW-0007">Acetylation</keyword>
<keyword id="KW-0903">Direct protein sequencing</keyword>
<keyword id="KW-0349">Heme</keyword>
<keyword id="KW-0408">Iron</keyword>
<keyword id="KW-0479">Metal-binding</keyword>
<keyword id="KW-0561">Oxygen transport</keyword>
<keyword id="KW-0597">Phosphoprotein</keyword>
<keyword id="KW-0813">Transport</keyword>
<accession>P09423</accession>
<sequence>MVLSAADKGNVKAAWGKVGGHAAEYGAEALERMFLSFPTTKTYFPHFDLSHGSAQVKGHGAKVAAALTKAVGHLDDLPGALSELSDLHAHKLRVDPVNFKLLSHSLLVTLASHLPNDFTPAVHASLDKFLANVSTVLTSKYR</sequence>
<proteinExistence type="evidence at protein level"/>
<feature type="initiator methionine" description="Removed" evidence="2">
    <location>
        <position position="1"/>
    </location>
</feature>
<feature type="chain" id="PRO_0000052564" description="Hemoglobin subunit alpha-I/II">
    <location>
        <begin position="2"/>
        <end position="142"/>
    </location>
</feature>
<feature type="domain" description="Globin" evidence="4">
    <location>
        <begin position="2"/>
        <end position="142"/>
    </location>
</feature>
<feature type="binding site" evidence="4">
    <location>
        <position position="59"/>
    </location>
    <ligand>
        <name>O2</name>
        <dbReference type="ChEBI" id="CHEBI:15379"/>
    </ligand>
</feature>
<feature type="binding site" description="proximal binding residue" evidence="4">
    <location>
        <position position="88"/>
    </location>
    <ligand>
        <name>heme b</name>
        <dbReference type="ChEBI" id="CHEBI:60344"/>
    </ligand>
    <ligandPart>
        <name>Fe</name>
        <dbReference type="ChEBI" id="CHEBI:18248"/>
    </ligandPart>
</feature>
<feature type="modified residue" description="Phosphoserine" evidence="3">
    <location>
        <position position="4"/>
    </location>
</feature>
<feature type="modified residue" description="N6-succinyllysine" evidence="1">
    <location>
        <position position="8"/>
    </location>
</feature>
<feature type="modified residue" description="N6-succinyllysine" evidence="1">
    <location>
        <position position="12"/>
    </location>
</feature>
<feature type="modified residue" description="N6-acetyllysine; alternate" evidence="3">
    <location>
        <position position="17"/>
    </location>
</feature>
<feature type="modified residue" description="N6-succinyllysine; alternate" evidence="1">
    <location>
        <position position="17"/>
    </location>
</feature>
<feature type="modified residue" description="Phosphotyrosine" evidence="3">
    <location>
        <position position="25"/>
    </location>
</feature>
<feature type="modified residue" description="Phosphoserine" evidence="3">
    <location>
        <position position="36"/>
    </location>
</feature>
<feature type="modified residue" description="N6-succinyllysine" evidence="1">
    <location>
        <position position="41"/>
    </location>
</feature>
<feature type="modified residue" description="Phosphoserine" evidence="3">
    <location>
        <position position="50"/>
    </location>
</feature>
<feature type="modified residue" description="Phosphoserine" evidence="1">
    <location>
        <position position="103"/>
    </location>
</feature>
<feature type="modified residue" description="Phosphothreonine" evidence="1">
    <location>
        <position position="109"/>
    </location>
</feature>
<feature type="modified residue" description="Phosphoserine" evidence="1">
    <location>
        <position position="125"/>
    </location>
</feature>
<feature type="modified residue" description="Phosphothreonine" evidence="1">
    <location>
        <position position="135"/>
    </location>
</feature>
<feature type="modified residue" description="Phosphothreonine" evidence="1">
    <location>
        <position position="138"/>
    </location>
</feature>
<feature type="modified residue" description="Phosphoserine" evidence="1">
    <location>
        <position position="139"/>
    </location>
</feature>
<feature type="sequence variant" description="In alpha-1.">
    <original>G</original>
    <variation>D</variation>
    <location>
        <position position="20"/>
    </location>
</feature>
<reference key="1">
    <citation type="journal article" date="1986" name="Biol. Chem. Hoppe-Seyler">
        <title>Intrinsic oxygen affinity of hemoglobins: the hemoglobin of bisons (Bison bonasus,Bovidae).</title>
        <authorList>
            <person name="Mazur G."/>
            <person name="Mueller E."/>
            <person name="Braunitzer G."/>
            <person name="Wiesner H."/>
        </authorList>
    </citation>
    <scope>PROTEIN SEQUENCE OF 2-142</scope>
</reference>
<comment type="function">
    <text>Involved in oxygen transport from the lung to the various peripheral tissues.</text>
</comment>
<comment type="subunit">
    <text>Heterotetramer of two alpha chains and two beta chains.</text>
</comment>
<comment type="tissue specificity">
    <text>Red blood cells.</text>
</comment>
<comment type="polymorphism">
    <text>There are two alleles. The sequence shown is that of alpha-II.</text>
</comment>
<comment type="similarity">
    <text evidence="4">Belongs to the globin family.</text>
</comment>